<evidence type="ECO:0000255" key="1">
    <source>
        <dbReference type="HAMAP-Rule" id="MF_01371"/>
    </source>
</evidence>
<evidence type="ECO:0000305" key="2"/>
<name>RL30_METHJ</name>
<comment type="subunit">
    <text evidence="1">Part of the 50S ribosomal subunit.</text>
</comment>
<comment type="similarity">
    <text evidence="1">Belongs to the universal ribosomal protein uL30 family.</text>
</comment>
<sequence>MYAVVQVRGTVKTRREIKDTLKMLRLHHINHCVLIPDTPAYVGMIRKVKDFIAYGEVDAKTLEELLVNRGRLVGDIRLTDEYVKENSQYSGISDFAAALAGGQARLTDVPGLKPVLRLHPPRKGYKTTKRTVQQGGSLGYHGENINDLLYKMR</sequence>
<keyword id="KW-1185">Reference proteome</keyword>
<keyword id="KW-0687">Ribonucleoprotein</keyword>
<keyword id="KW-0689">Ribosomal protein</keyword>
<reference key="1">
    <citation type="journal article" date="2016" name="Stand. Genomic Sci.">
        <title>Complete genome sequence of Methanospirillum hungatei type strain JF1.</title>
        <authorList>
            <person name="Gunsalus R.P."/>
            <person name="Cook L.E."/>
            <person name="Crable B."/>
            <person name="Rohlin L."/>
            <person name="McDonald E."/>
            <person name="Mouttaki H."/>
            <person name="Sieber J.R."/>
            <person name="Poweleit N."/>
            <person name="Zhou H."/>
            <person name="Lapidus A.L."/>
            <person name="Daligault H.E."/>
            <person name="Land M."/>
            <person name="Gilna P."/>
            <person name="Ivanova N."/>
            <person name="Kyrpides N."/>
            <person name="Culley D.E."/>
            <person name="McInerney M.J."/>
        </authorList>
    </citation>
    <scope>NUCLEOTIDE SEQUENCE [LARGE SCALE GENOMIC DNA]</scope>
    <source>
        <strain>ATCC 27890 / DSM 864 / NBRC 100397 / JF-1</strain>
    </source>
</reference>
<organism>
    <name type="scientific">Methanospirillum hungatei JF-1 (strain ATCC 27890 / DSM 864 / NBRC 100397 / JF-1)</name>
    <dbReference type="NCBI Taxonomy" id="323259"/>
    <lineage>
        <taxon>Archaea</taxon>
        <taxon>Methanobacteriati</taxon>
        <taxon>Methanobacteriota</taxon>
        <taxon>Stenosarchaea group</taxon>
        <taxon>Methanomicrobia</taxon>
        <taxon>Methanomicrobiales</taxon>
        <taxon>Methanospirillaceae</taxon>
        <taxon>Methanospirillum</taxon>
    </lineage>
</organism>
<dbReference type="EMBL" id="CP000254">
    <property type="protein sequence ID" value="ABD41937.1"/>
    <property type="molecule type" value="Genomic_DNA"/>
</dbReference>
<dbReference type="RefSeq" id="WP_011449195.1">
    <property type="nucleotide sequence ID" value="NC_007796.1"/>
</dbReference>
<dbReference type="SMR" id="Q2FSG4"/>
<dbReference type="FunCoup" id="Q2FSG4">
    <property type="interactions" value="148"/>
</dbReference>
<dbReference type="STRING" id="323259.Mhun_2232"/>
<dbReference type="EnsemblBacteria" id="ABD41937">
    <property type="protein sequence ID" value="ABD41937"/>
    <property type="gene ID" value="Mhun_2232"/>
</dbReference>
<dbReference type="GeneID" id="3924100"/>
<dbReference type="KEGG" id="mhu:Mhun_2232"/>
<dbReference type="eggNOG" id="arCOG04086">
    <property type="taxonomic scope" value="Archaea"/>
</dbReference>
<dbReference type="HOGENOM" id="CLU_055156_6_0_2"/>
<dbReference type="InParanoid" id="Q2FSG4"/>
<dbReference type="OrthoDB" id="6379at2157"/>
<dbReference type="Proteomes" id="UP000001941">
    <property type="component" value="Chromosome"/>
</dbReference>
<dbReference type="GO" id="GO:0022625">
    <property type="term" value="C:cytosolic large ribosomal subunit"/>
    <property type="evidence" value="ECO:0007669"/>
    <property type="project" value="TreeGrafter"/>
</dbReference>
<dbReference type="GO" id="GO:0003723">
    <property type="term" value="F:RNA binding"/>
    <property type="evidence" value="ECO:0007669"/>
    <property type="project" value="TreeGrafter"/>
</dbReference>
<dbReference type="GO" id="GO:0003735">
    <property type="term" value="F:structural constituent of ribosome"/>
    <property type="evidence" value="ECO:0007669"/>
    <property type="project" value="InterPro"/>
</dbReference>
<dbReference type="GO" id="GO:0000463">
    <property type="term" value="P:maturation of LSU-rRNA from tricistronic rRNA transcript (SSU-rRNA, 5.8S rRNA, LSU-rRNA)"/>
    <property type="evidence" value="ECO:0007669"/>
    <property type="project" value="TreeGrafter"/>
</dbReference>
<dbReference type="GO" id="GO:0006412">
    <property type="term" value="P:translation"/>
    <property type="evidence" value="ECO:0007669"/>
    <property type="project" value="UniProtKB-UniRule"/>
</dbReference>
<dbReference type="CDD" id="cd01657">
    <property type="entry name" value="Ribosomal_L7_archeal_euk"/>
    <property type="match status" value="1"/>
</dbReference>
<dbReference type="Gene3D" id="1.10.15.30">
    <property type="match status" value="1"/>
</dbReference>
<dbReference type="Gene3D" id="3.30.1390.20">
    <property type="entry name" value="Ribosomal protein L30, ferredoxin-like fold domain"/>
    <property type="match status" value="1"/>
</dbReference>
<dbReference type="HAMAP" id="MF_01371_A">
    <property type="entry name" value="Ribosomal_uL30_A"/>
    <property type="match status" value="1"/>
</dbReference>
<dbReference type="InterPro" id="IPR036919">
    <property type="entry name" value="Ribo_uL30_ferredoxin-like_sf"/>
</dbReference>
<dbReference type="InterPro" id="IPR039699">
    <property type="entry name" value="Ribosomal_uL30"/>
</dbReference>
<dbReference type="InterPro" id="IPR005997">
    <property type="entry name" value="Ribosomal_uL30_arc"/>
</dbReference>
<dbReference type="InterPro" id="IPR018038">
    <property type="entry name" value="Ribosomal_uL30_CS"/>
</dbReference>
<dbReference type="InterPro" id="IPR035808">
    <property type="entry name" value="Ribosomal_uL30_euk_arc"/>
</dbReference>
<dbReference type="InterPro" id="IPR016082">
    <property type="entry name" value="Ribosomal_uL30_ferredoxin-like"/>
</dbReference>
<dbReference type="NCBIfam" id="NF004711">
    <property type="entry name" value="PRK06049.1"/>
    <property type="match status" value="1"/>
</dbReference>
<dbReference type="NCBIfam" id="TIGR01309">
    <property type="entry name" value="uL30_arch"/>
    <property type="match status" value="1"/>
</dbReference>
<dbReference type="PANTHER" id="PTHR11524">
    <property type="entry name" value="60S RIBOSOMAL PROTEIN L7"/>
    <property type="match status" value="1"/>
</dbReference>
<dbReference type="PANTHER" id="PTHR11524:SF16">
    <property type="entry name" value="LARGE RIBOSOMAL SUBUNIT PROTEIN UL30"/>
    <property type="match status" value="1"/>
</dbReference>
<dbReference type="Pfam" id="PF00327">
    <property type="entry name" value="Ribosomal_L30"/>
    <property type="match status" value="1"/>
</dbReference>
<dbReference type="SUPFAM" id="SSF55129">
    <property type="entry name" value="Ribosomal protein L30p/L7e"/>
    <property type="match status" value="1"/>
</dbReference>
<dbReference type="PROSITE" id="PS00634">
    <property type="entry name" value="RIBOSOMAL_L30"/>
    <property type="match status" value="1"/>
</dbReference>
<gene>
    <name evidence="1" type="primary">rpl30</name>
    <name type="ordered locus">Mhun_2232</name>
</gene>
<proteinExistence type="inferred from homology"/>
<accession>Q2FSG4</accession>
<feature type="chain" id="PRO_0000273909" description="Large ribosomal subunit protein uL30">
    <location>
        <begin position="1"/>
        <end position="153"/>
    </location>
</feature>
<protein>
    <recommendedName>
        <fullName evidence="1">Large ribosomal subunit protein uL30</fullName>
    </recommendedName>
    <alternativeName>
        <fullName evidence="2">50S ribosomal protein L30</fullName>
    </alternativeName>
</protein>